<comment type="function">
    <text evidence="1">Part of the Sec protein translocase complex. Interacts with the SecYEG preprotein conducting channel. Has a central role in coupling the hydrolysis of ATP to the transfer of proteins into and across the cell membrane, serving both as a receptor for the preprotein-SecB complex and as an ATP-driven molecular motor driving the stepwise translocation of polypeptide chains across the membrane.</text>
</comment>
<comment type="catalytic activity">
    <reaction evidence="1">
        <text>ATP + H2O + cellular proteinSide 1 = ADP + phosphate + cellular proteinSide 2.</text>
        <dbReference type="EC" id="7.4.2.8"/>
    </reaction>
</comment>
<comment type="cofactor">
    <cofactor evidence="1">
        <name>Zn(2+)</name>
        <dbReference type="ChEBI" id="CHEBI:29105"/>
    </cofactor>
    <text evidence="1">May bind 1 zinc ion per subunit.</text>
</comment>
<comment type="subunit">
    <text evidence="1">Monomer and homodimer. Part of the essential Sec protein translocation apparatus which comprises SecA, SecYEG and auxiliary proteins SecDF-YajC and YidC.</text>
</comment>
<comment type="subcellular location">
    <subcellularLocation>
        <location evidence="1">Cell inner membrane</location>
        <topology evidence="1">Peripheral membrane protein</topology>
        <orientation evidence="1">Cytoplasmic side</orientation>
    </subcellularLocation>
    <subcellularLocation>
        <location evidence="1">Cytoplasm</location>
    </subcellularLocation>
    <text evidence="1">Distribution is 50-50.</text>
</comment>
<comment type="induction">
    <text evidence="1">Repressed under conditions of excess protein secretion capacity and derepressed when protein secretion becomes limiting. This is regulated by SecM.</text>
</comment>
<comment type="similarity">
    <text evidence="1">Belongs to the SecA family.</text>
</comment>
<name>SECA_YERPE</name>
<evidence type="ECO:0000255" key="1">
    <source>
        <dbReference type="HAMAP-Rule" id="MF_01382"/>
    </source>
</evidence>
<evidence type="ECO:0000256" key="2">
    <source>
        <dbReference type="SAM" id="MobiDB-lite"/>
    </source>
</evidence>
<dbReference type="EC" id="7.4.2.8" evidence="1"/>
<dbReference type="EMBL" id="AE009952">
    <property type="protein sequence ID" value="AAM87165.1"/>
    <property type="molecule type" value="Genomic_DNA"/>
</dbReference>
<dbReference type="EMBL" id="AE017042">
    <property type="protein sequence ID" value="AAS63768.1"/>
    <property type="molecule type" value="Genomic_DNA"/>
</dbReference>
<dbReference type="EMBL" id="AL590842">
    <property type="protein sequence ID" value="CAL19243.1"/>
    <property type="molecule type" value="Genomic_DNA"/>
</dbReference>
<dbReference type="PIR" id="AI0069">
    <property type="entry name" value="AI0069"/>
</dbReference>
<dbReference type="RefSeq" id="WP_002210426.1">
    <property type="nucleotide sequence ID" value="NZ_WUCM01000081.1"/>
</dbReference>
<dbReference type="RefSeq" id="YP_002345635.1">
    <property type="nucleotide sequence ID" value="NC_003143.1"/>
</dbReference>
<dbReference type="SMR" id="Q7CGB6"/>
<dbReference type="IntAct" id="Q7CGB6">
    <property type="interactions" value="2"/>
</dbReference>
<dbReference type="STRING" id="214092.YPO0564"/>
<dbReference type="PaxDb" id="214092-YPO0564"/>
<dbReference type="DNASU" id="1148564"/>
<dbReference type="EnsemblBacteria" id="AAS63768">
    <property type="protein sequence ID" value="AAS63768"/>
    <property type="gene ID" value="YP_3620"/>
</dbReference>
<dbReference type="GeneID" id="57974051"/>
<dbReference type="KEGG" id="ype:YPO0564"/>
<dbReference type="KEGG" id="ypk:y3617"/>
<dbReference type="KEGG" id="ypm:YP_3620"/>
<dbReference type="PATRIC" id="fig|214092.21.peg.817"/>
<dbReference type="eggNOG" id="COG0653">
    <property type="taxonomic scope" value="Bacteria"/>
</dbReference>
<dbReference type="HOGENOM" id="CLU_005314_3_0_6"/>
<dbReference type="OMA" id="MVHYDVQ"/>
<dbReference type="OrthoDB" id="9805579at2"/>
<dbReference type="Proteomes" id="UP000000815">
    <property type="component" value="Chromosome"/>
</dbReference>
<dbReference type="Proteomes" id="UP000001019">
    <property type="component" value="Chromosome"/>
</dbReference>
<dbReference type="Proteomes" id="UP000002490">
    <property type="component" value="Chromosome"/>
</dbReference>
<dbReference type="GO" id="GO:0031522">
    <property type="term" value="C:cell envelope Sec protein transport complex"/>
    <property type="evidence" value="ECO:0000318"/>
    <property type="project" value="GO_Central"/>
</dbReference>
<dbReference type="GO" id="GO:0005737">
    <property type="term" value="C:cytoplasm"/>
    <property type="evidence" value="ECO:0007669"/>
    <property type="project" value="UniProtKB-SubCell"/>
</dbReference>
<dbReference type="GO" id="GO:0005886">
    <property type="term" value="C:plasma membrane"/>
    <property type="evidence" value="ECO:0000318"/>
    <property type="project" value="GO_Central"/>
</dbReference>
<dbReference type="GO" id="GO:0005524">
    <property type="term" value="F:ATP binding"/>
    <property type="evidence" value="ECO:0000318"/>
    <property type="project" value="GO_Central"/>
</dbReference>
<dbReference type="GO" id="GO:0046872">
    <property type="term" value="F:metal ion binding"/>
    <property type="evidence" value="ECO:0007669"/>
    <property type="project" value="UniProtKB-KW"/>
</dbReference>
<dbReference type="GO" id="GO:0008564">
    <property type="term" value="F:protein-exporting ATPase activity"/>
    <property type="evidence" value="ECO:0007669"/>
    <property type="project" value="UniProtKB-EC"/>
</dbReference>
<dbReference type="GO" id="GO:0065002">
    <property type="term" value="P:intracellular protein transmembrane transport"/>
    <property type="evidence" value="ECO:0007669"/>
    <property type="project" value="UniProtKB-UniRule"/>
</dbReference>
<dbReference type="GO" id="GO:0017038">
    <property type="term" value="P:protein import"/>
    <property type="evidence" value="ECO:0007669"/>
    <property type="project" value="InterPro"/>
</dbReference>
<dbReference type="GO" id="GO:0006605">
    <property type="term" value="P:protein targeting"/>
    <property type="evidence" value="ECO:0007669"/>
    <property type="project" value="UniProtKB-UniRule"/>
</dbReference>
<dbReference type="GO" id="GO:0043952">
    <property type="term" value="P:protein transport by the Sec complex"/>
    <property type="evidence" value="ECO:0000318"/>
    <property type="project" value="GO_Central"/>
</dbReference>
<dbReference type="CDD" id="cd17928">
    <property type="entry name" value="DEXDc_SecA"/>
    <property type="match status" value="1"/>
</dbReference>
<dbReference type="CDD" id="cd18803">
    <property type="entry name" value="SF2_C_secA"/>
    <property type="match status" value="1"/>
</dbReference>
<dbReference type="FunFam" id="1.10.3060.10:FF:000001">
    <property type="entry name" value="Preprotein translocase subunit SecA"/>
    <property type="match status" value="1"/>
</dbReference>
<dbReference type="FunFam" id="3.40.50.300:FF:000081">
    <property type="entry name" value="Preprotein translocase subunit SecA"/>
    <property type="match status" value="1"/>
</dbReference>
<dbReference type="FunFam" id="3.40.50.300:FF:000113">
    <property type="entry name" value="Preprotein translocase subunit SecA"/>
    <property type="match status" value="1"/>
</dbReference>
<dbReference type="FunFam" id="3.90.1440.10:FF:000001">
    <property type="entry name" value="Preprotein translocase subunit SecA"/>
    <property type="match status" value="1"/>
</dbReference>
<dbReference type="Gene3D" id="1.10.3060.10">
    <property type="entry name" value="Helical scaffold and wing domains of SecA"/>
    <property type="match status" value="1"/>
</dbReference>
<dbReference type="Gene3D" id="3.40.50.300">
    <property type="entry name" value="P-loop containing nucleotide triphosphate hydrolases"/>
    <property type="match status" value="2"/>
</dbReference>
<dbReference type="Gene3D" id="3.90.1440.10">
    <property type="entry name" value="SecA, preprotein cross-linking domain"/>
    <property type="match status" value="1"/>
</dbReference>
<dbReference type="HAMAP" id="MF_01382">
    <property type="entry name" value="SecA"/>
    <property type="match status" value="1"/>
</dbReference>
<dbReference type="InterPro" id="IPR014001">
    <property type="entry name" value="Helicase_ATP-bd"/>
</dbReference>
<dbReference type="InterPro" id="IPR027417">
    <property type="entry name" value="P-loop_NTPase"/>
</dbReference>
<dbReference type="InterPro" id="IPR004027">
    <property type="entry name" value="SEC_C_motif"/>
</dbReference>
<dbReference type="InterPro" id="IPR000185">
    <property type="entry name" value="SecA"/>
</dbReference>
<dbReference type="InterPro" id="IPR020937">
    <property type="entry name" value="SecA_CS"/>
</dbReference>
<dbReference type="InterPro" id="IPR011115">
    <property type="entry name" value="SecA_DEAD"/>
</dbReference>
<dbReference type="InterPro" id="IPR014018">
    <property type="entry name" value="SecA_motor_DEAD"/>
</dbReference>
<dbReference type="InterPro" id="IPR011130">
    <property type="entry name" value="SecA_preprotein_X-link_dom"/>
</dbReference>
<dbReference type="InterPro" id="IPR044722">
    <property type="entry name" value="SecA_SF2_C"/>
</dbReference>
<dbReference type="InterPro" id="IPR011116">
    <property type="entry name" value="SecA_Wing/Scaffold"/>
</dbReference>
<dbReference type="InterPro" id="IPR036266">
    <property type="entry name" value="SecA_Wing/Scaffold_sf"/>
</dbReference>
<dbReference type="InterPro" id="IPR036670">
    <property type="entry name" value="SecA_X-link_sf"/>
</dbReference>
<dbReference type="NCBIfam" id="NF009538">
    <property type="entry name" value="PRK12904.1"/>
    <property type="match status" value="1"/>
</dbReference>
<dbReference type="NCBIfam" id="TIGR00963">
    <property type="entry name" value="secA"/>
    <property type="match status" value="1"/>
</dbReference>
<dbReference type="PANTHER" id="PTHR30612:SF0">
    <property type="entry name" value="CHLOROPLAST PROTEIN-TRANSPORTING ATPASE"/>
    <property type="match status" value="1"/>
</dbReference>
<dbReference type="PANTHER" id="PTHR30612">
    <property type="entry name" value="SECA INNER MEMBRANE COMPONENT OF SEC PROTEIN SECRETION SYSTEM"/>
    <property type="match status" value="1"/>
</dbReference>
<dbReference type="Pfam" id="PF21090">
    <property type="entry name" value="P-loop_SecA"/>
    <property type="match status" value="1"/>
</dbReference>
<dbReference type="Pfam" id="PF02810">
    <property type="entry name" value="SEC-C"/>
    <property type="match status" value="1"/>
</dbReference>
<dbReference type="Pfam" id="PF07517">
    <property type="entry name" value="SecA_DEAD"/>
    <property type="match status" value="1"/>
</dbReference>
<dbReference type="Pfam" id="PF01043">
    <property type="entry name" value="SecA_PP_bind"/>
    <property type="match status" value="1"/>
</dbReference>
<dbReference type="Pfam" id="PF07516">
    <property type="entry name" value="SecA_SW"/>
    <property type="match status" value="1"/>
</dbReference>
<dbReference type="PRINTS" id="PR00906">
    <property type="entry name" value="SECA"/>
</dbReference>
<dbReference type="SMART" id="SM00957">
    <property type="entry name" value="SecA_DEAD"/>
    <property type="match status" value="1"/>
</dbReference>
<dbReference type="SMART" id="SM00958">
    <property type="entry name" value="SecA_PP_bind"/>
    <property type="match status" value="1"/>
</dbReference>
<dbReference type="SUPFAM" id="SSF81886">
    <property type="entry name" value="Helical scaffold and wing domains of SecA"/>
    <property type="match status" value="1"/>
</dbReference>
<dbReference type="SUPFAM" id="SSF52540">
    <property type="entry name" value="P-loop containing nucleoside triphosphate hydrolases"/>
    <property type="match status" value="2"/>
</dbReference>
<dbReference type="SUPFAM" id="SSF81767">
    <property type="entry name" value="Pre-protein crosslinking domain of SecA"/>
    <property type="match status" value="1"/>
</dbReference>
<dbReference type="PROSITE" id="PS01312">
    <property type="entry name" value="SECA"/>
    <property type="match status" value="1"/>
</dbReference>
<dbReference type="PROSITE" id="PS51196">
    <property type="entry name" value="SECA_MOTOR_DEAD"/>
    <property type="match status" value="1"/>
</dbReference>
<accession>Q7CGB6</accession>
<accession>Q74Q78</accession>
<protein>
    <recommendedName>
        <fullName evidence="1">Protein translocase subunit SecA</fullName>
        <ecNumber evidence="1">7.4.2.8</ecNumber>
    </recommendedName>
</protein>
<proteinExistence type="inferred from homology"/>
<feature type="chain" id="PRO_0000321051" description="Protein translocase subunit SecA">
    <location>
        <begin position="1"/>
        <end position="904"/>
    </location>
</feature>
<feature type="region of interest" description="Disordered" evidence="2">
    <location>
        <begin position="851"/>
        <end position="870"/>
    </location>
</feature>
<feature type="binding site" evidence="1">
    <location>
        <position position="87"/>
    </location>
    <ligand>
        <name>ATP</name>
        <dbReference type="ChEBI" id="CHEBI:30616"/>
    </ligand>
</feature>
<feature type="binding site" evidence="1">
    <location>
        <begin position="105"/>
        <end position="109"/>
    </location>
    <ligand>
        <name>ATP</name>
        <dbReference type="ChEBI" id="CHEBI:30616"/>
    </ligand>
</feature>
<feature type="binding site" evidence="1">
    <location>
        <position position="512"/>
    </location>
    <ligand>
        <name>ATP</name>
        <dbReference type="ChEBI" id="CHEBI:30616"/>
    </ligand>
</feature>
<feature type="binding site" evidence="1">
    <location>
        <position position="888"/>
    </location>
    <ligand>
        <name>Zn(2+)</name>
        <dbReference type="ChEBI" id="CHEBI:29105"/>
    </ligand>
</feature>
<feature type="binding site" evidence="1">
    <location>
        <position position="890"/>
    </location>
    <ligand>
        <name>Zn(2+)</name>
        <dbReference type="ChEBI" id="CHEBI:29105"/>
    </ligand>
</feature>
<feature type="binding site" evidence="1">
    <location>
        <position position="899"/>
    </location>
    <ligand>
        <name>Zn(2+)</name>
        <dbReference type="ChEBI" id="CHEBI:29105"/>
    </ligand>
</feature>
<feature type="binding site" evidence="1">
    <location>
        <position position="900"/>
    </location>
    <ligand>
        <name>Zn(2+)</name>
        <dbReference type="ChEBI" id="CHEBI:29105"/>
    </ligand>
</feature>
<sequence length="904" mass="102625">MLIKLLTKVFGSRNDRTLRRMQKVVDVINRMEPDIEKLTDTELRAKTDEFRERLAKGEVLENLIPEAFAVVREASKRVFGMRHFDVQLLGGMVLNERCIAEMRTGEGKTLTATLPAYLNALSGRGVHVVTVNDYLAQRDAENNRPLFEFLGLSIGINLPNMTAPAKRAAYAADITYGTNNEFGFDYLRDNMAFSPEERVQRQLHYALVDEVDSILIDEARTPLIISGPAEDSSEMYIRVNKLIPKLIRQEKEDSDSFQGEGHFSVDEKSRQVHLTERGLILIEQMLVEAGIMDEGESLYSPANIMLMHHVTAALRAHVLFTRDVDYIVKDGEVIIVDEHTGRTMQGRRWSDGLHQAVEAKEGVEIQNENQTLASITFQNYFRLYEKLAGMTGTADTEAFEFSSIYKLDTIVVPTNRPMIRKDLADLVYMTEQEKIGAIIEDIRERTANGQPVLVGTISIEKSEVVSAELTKAGIEHKVLNAKFHAMEAEIVSQAGQPGAVTIATNMAGRGTDIVLGGSWQSEIAALEDPTEEQIAAIKAAWQIRHDAVLASGGLHIIGTERHESRRIDNQLRGRAGRQGDAGSSRFYLSMEDALMRIFASDRVSGMMRKLGMKPGEAIEHPWVTKAIANAQRKVESRNFDIRKQLLEYDDVANDQRRAIYSQRNELLDVSDVSETINSIREDVFKTTIDSYIPTQSLEEMWDIEGLEQRLKNDFDLDMPIAKWLEDEPQLHEETLRERILQQAIETYQRKEEVVGIEMMRNFEKGVMLQTLDSLWKEHLAAMDYLRQGIHLRGYAQKDPKQEYKRESFAMFAAMLESLKYEVISVLSKVQVRMPEEVEALEVQRREEAERLARQQQLSHQTDNSALMSEEEVKVANSLERKVGRNDPCPCGSGKKYKQCHGRLQ</sequence>
<gene>
    <name evidence="1" type="primary">secA</name>
    <name type="ordered locus">YPO0564</name>
    <name type="ordered locus">y3617</name>
    <name type="ordered locus">YP_3620</name>
</gene>
<organism>
    <name type="scientific">Yersinia pestis</name>
    <dbReference type="NCBI Taxonomy" id="632"/>
    <lineage>
        <taxon>Bacteria</taxon>
        <taxon>Pseudomonadati</taxon>
        <taxon>Pseudomonadota</taxon>
        <taxon>Gammaproteobacteria</taxon>
        <taxon>Enterobacterales</taxon>
        <taxon>Yersiniaceae</taxon>
        <taxon>Yersinia</taxon>
    </lineage>
</organism>
<keyword id="KW-0067">ATP-binding</keyword>
<keyword id="KW-0997">Cell inner membrane</keyword>
<keyword id="KW-1003">Cell membrane</keyword>
<keyword id="KW-0963">Cytoplasm</keyword>
<keyword id="KW-0472">Membrane</keyword>
<keyword id="KW-0479">Metal-binding</keyword>
<keyword id="KW-0547">Nucleotide-binding</keyword>
<keyword id="KW-0653">Protein transport</keyword>
<keyword id="KW-1185">Reference proteome</keyword>
<keyword id="KW-1278">Translocase</keyword>
<keyword id="KW-0811">Translocation</keyword>
<keyword id="KW-0813">Transport</keyword>
<keyword id="KW-0862">Zinc</keyword>
<reference key="1">
    <citation type="journal article" date="2002" name="J. Bacteriol.">
        <title>Genome sequence of Yersinia pestis KIM.</title>
        <authorList>
            <person name="Deng W."/>
            <person name="Burland V."/>
            <person name="Plunkett G. III"/>
            <person name="Boutin A."/>
            <person name="Mayhew G.F."/>
            <person name="Liss P."/>
            <person name="Perna N.T."/>
            <person name="Rose D.J."/>
            <person name="Mau B."/>
            <person name="Zhou S."/>
            <person name="Schwartz D.C."/>
            <person name="Fetherston J.D."/>
            <person name="Lindler L.E."/>
            <person name="Brubaker R.R."/>
            <person name="Plano G.V."/>
            <person name="Straley S.C."/>
            <person name="McDonough K.A."/>
            <person name="Nilles M.L."/>
            <person name="Matson J.S."/>
            <person name="Blattner F.R."/>
            <person name="Perry R.D."/>
        </authorList>
    </citation>
    <scope>NUCLEOTIDE SEQUENCE [LARGE SCALE GENOMIC DNA]</scope>
    <source>
        <strain>KIM10+ / Biovar Mediaevalis</strain>
    </source>
</reference>
<reference key="2">
    <citation type="journal article" date="2001" name="Nature">
        <title>Genome sequence of Yersinia pestis, the causative agent of plague.</title>
        <authorList>
            <person name="Parkhill J."/>
            <person name="Wren B.W."/>
            <person name="Thomson N.R."/>
            <person name="Titball R.W."/>
            <person name="Holden M.T.G."/>
            <person name="Prentice M.B."/>
            <person name="Sebaihia M."/>
            <person name="James K.D."/>
            <person name="Churcher C.M."/>
            <person name="Mungall K.L."/>
            <person name="Baker S."/>
            <person name="Basham D."/>
            <person name="Bentley S.D."/>
            <person name="Brooks K."/>
            <person name="Cerdeno-Tarraga A.-M."/>
            <person name="Chillingworth T."/>
            <person name="Cronin A."/>
            <person name="Davies R.M."/>
            <person name="Davis P."/>
            <person name="Dougan G."/>
            <person name="Feltwell T."/>
            <person name="Hamlin N."/>
            <person name="Holroyd S."/>
            <person name="Jagels K."/>
            <person name="Karlyshev A.V."/>
            <person name="Leather S."/>
            <person name="Moule S."/>
            <person name="Oyston P.C.F."/>
            <person name="Quail M.A."/>
            <person name="Rutherford K.M."/>
            <person name="Simmonds M."/>
            <person name="Skelton J."/>
            <person name="Stevens K."/>
            <person name="Whitehead S."/>
            <person name="Barrell B.G."/>
        </authorList>
    </citation>
    <scope>NUCLEOTIDE SEQUENCE [LARGE SCALE GENOMIC DNA]</scope>
    <source>
        <strain>CO-92 / Biovar Orientalis</strain>
    </source>
</reference>
<reference key="3">
    <citation type="journal article" date="2004" name="DNA Res.">
        <title>Complete genome sequence of Yersinia pestis strain 91001, an isolate avirulent to humans.</title>
        <authorList>
            <person name="Song Y."/>
            <person name="Tong Z."/>
            <person name="Wang J."/>
            <person name="Wang L."/>
            <person name="Guo Z."/>
            <person name="Han Y."/>
            <person name="Zhang J."/>
            <person name="Pei D."/>
            <person name="Zhou D."/>
            <person name="Qin H."/>
            <person name="Pang X."/>
            <person name="Han Y."/>
            <person name="Zhai J."/>
            <person name="Li M."/>
            <person name="Cui B."/>
            <person name="Qi Z."/>
            <person name="Jin L."/>
            <person name="Dai R."/>
            <person name="Chen F."/>
            <person name="Li S."/>
            <person name="Ye C."/>
            <person name="Du Z."/>
            <person name="Lin W."/>
            <person name="Wang J."/>
            <person name="Yu J."/>
            <person name="Yang H."/>
            <person name="Wang J."/>
            <person name="Huang P."/>
            <person name="Yang R."/>
        </authorList>
    </citation>
    <scope>NUCLEOTIDE SEQUENCE [LARGE SCALE GENOMIC DNA]</scope>
    <source>
        <strain>91001 / Biovar Mediaevalis</strain>
    </source>
</reference>